<organism>
    <name type="scientific">Ligilactobacillus salivarius (strain UCC118)</name>
    <name type="common">Lactobacillus salivarius</name>
    <dbReference type="NCBI Taxonomy" id="362948"/>
    <lineage>
        <taxon>Bacteria</taxon>
        <taxon>Bacillati</taxon>
        <taxon>Bacillota</taxon>
        <taxon>Bacilli</taxon>
        <taxon>Lactobacillales</taxon>
        <taxon>Lactobacillaceae</taxon>
        <taxon>Ligilactobacillus</taxon>
    </lineage>
</organism>
<keyword id="KW-0143">Chaperone</keyword>
<keyword id="KW-0963">Cytoplasm</keyword>
<keyword id="KW-1185">Reference proteome</keyword>
<accession>Q1WSV9</accession>
<sequence>MLKPLGDRVVLKVQKEEEQSIGGIVIASNAKEKPTTGEVIAVGNGRILDNGQRVEPEVKVGQSVVFDKYAGSEVKYEGEEYLVIRENDIIAVID</sequence>
<comment type="function">
    <text evidence="1">Together with the chaperonin GroEL, plays an essential role in assisting protein folding. The GroEL-GroES system forms a nano-cage that allows encapsulation of the non-native substrate proteins and provides a physical environment optimized to promote and accelerate protein folding. GroES binds to the apical surface of the GroEL ring, thereby capping the opening of the GroEL channel.</text>
</comment>
<comment type="subunit">
    <text evidence="1">Heptamer of 7 subunits arranged in a ring. Interacts with the chaperonin GroEL.</text>
</comment>
<comment type="subcellular location">
    <subcellularLocation>
        <location evidence="1">Cytoplasm</location>
    </subcellularLocation>
</comment>
<comment type="similarity">
    <text evidence="1">Belongs to the GroES chaperonin family.</text>
</comment>
<proteinExistence type="inferred from homology"/>
<dbReference type="EMBL" id="CP000233">
    <property type="protein sequence ID" value="ABE00020.1"/>
    <property type="molecule type" value="Genomic_DNA"/>
</dbReference>
<dbReference type="RefSeq" id="WP_003706535.1">
    <property type="nucleotide sequence ID" value="NC_007929.1"/>
</dbReference>
<dbReference type="RefSeq" id="YP_536103.1">
    <property type="nucleotide sequence ID" value="NC_007929.1"/>
</dbReference>
<dbReference type="SMR" id="Q1WSV9"/>
<dbReference type="STRING" id="362948.LSL_1212"/>
<dbReference type="GeneID" id="89465940"/>
<dbReference type="KEGG" id="lsl:LSL_1212"/>
<dbReference type="PATRIC" id="fig|362948.14.peg.1286"/>
<dbReference type="HOGENOM" id="CLU_132825_2_1_9"/>
<dbReference type="OrthoDB" id="9806791at2"/>
<dbReference type="Proteomes" id="UP000006559">
    <property type="component" value="Chromosome"/>
</dbReference>
<dbReference type="GO" id="GO:0005737">
    <property type="term" value="C:cytoplasm"/>
    <property type="evidence" value="ECO:0007669"/>
    <property type="project" value="UniProtKB-SubCell"/>
</dbReference>
<dbReference type="GO" id="GO:0005524">
    <property type="term" value="F:ATP binding"/>
    <property type="evidence" value="ECO:0007669"/>
    <property type="project" value="InterPro"/>
</dbReference>
<dbReference type="GO" id="GO:0046872">
    <property type="term" value="F:metal ion binding"/>
    <property type="evidence" value="ECO:0007669"/>
    <property type="project" value="TreeGrafter"/>
</dbReference>
<dbReference type="GO" id="GO:0044183">
    <property type="term" value="F:protein folding chaperone"/>
    <property type="evidence" value="ECO:0007669"/>
    <property type="project" value="InterPro"/>
</dbReference>
<dbReference type="GO" id="GO:0051087">
    <property type="term" value="F:protein-folding chaperone binding"/>
    <property type="evidence" value="ECO:0007669"/>
    <property type="project" value="TreeGrafter"/>
</dbReference>
<dbReference type="GO" id="GO:0051082">
    <property type="term" value="F:unfolded protein binding"/>
    <property type="evidence" value="ECO:0007669"/>
    <property type="project" value="TreeGrafter"/>
</dbReference>
<dbReference type="GO" id="GO:0051085">
    <property type="term" value="P:chaperone cofactor-dependent protein refolding"/>
    <property type="evidence" value="ECO:0007669"/>
    <property type="project" value="TreeGrafter"/>
</dbReference>
<dbReference type="CDD" id="cd00320">
    <property type="entry name" value="cpn10"/>
    <property type="match status" value="1"/>
</dbReference>
<dbReference type="FunFam" id="2.30.33.40:FF:000001">
    <property type="entry name" value="10 kDa chaperonin"/>
    <property type="match status" value="1"/>
</dbReference>
<dbReference type="Gene3D" id="2.30.33.40">
    <property type="entry name" value="GroES chaperonin"/>
    <property type="match status" value="1"/>
</dbReference>
<dbReference type="HAMAP" id="MF_00580">
    <property type="entry name" value="CH10"/>
    <property type="match status" value="1"/>
</dbReference>
<dbReference type="InterPro" id="IPR020818">
    <property type="entry name" value="Chaperonin_GroES"/>
</dbReference>
<dbReference type="InterPro" id="IPR037124">
    <property type="entry name" value="Chaperonin_GroES_sf"/>
</dbReference>
<dbReference type="InterPro" id="IPR018369">
    <property type="entry name" value="Chaprnonin_Cpn10_CS"/>
</dbReference>
<dbReference type="InterPro" id="IPR011032">
    <property type="entry name" value="GroES-like_sf"/>
</dbReference>
<dbReference type="NCBIfam" id="NF001527">
    <property type="entry name" value="PRK00364.1-2"/>
    <property type="match status" value="1"/>
</dbReference>
<dbReference type="NCBIfam" id="NF001531">
    <property type="entry name" value="PRK00364.2-2"/>
    <property type="match status" value="1"/>
</dbReference>
<dbReference type="NCBIfam" id="NF001533">
    <property type="entry name" value="PRK00364.2-4"/>
    <property type="match status" value="1"/>
</dbReference>
<dbReference type="NCBIfam" id="NF001534">
    <property type="entry name" value="PRK00364.2-5"/>
    <property type="match status" value="1"/>
</dbReference>
<dbReference type="PANTHER" id="PTHR10772">
    <property type="entry name" value="10 KDA HEAT SHOCK PROTEIN"/>
    <property type="match status" value="1"/>
</dbReference>
<dbReference type="PANTHER" id="PTHR10772:SF58">
    <property type="entry name" value="CO-CHAPERONIN GROES"/>
    <property type="match status" value="1"/>
</dbReference>
<dbReference type="Pfam" id="PF00166">
    <property type="entry name" value="Cpn10"/>
    <property type="match status" value="1"/>
</dbReference>
<dbReference type="PRINTS" id="PR00297">
    <property type="entry name" value="CHAPERONIN10"/>
</dbReference>
<dbReference type="SMART" id="SM00883">
    <property type="entry name" value="Cpn10"/>
    <property type="match status" value="1"/>
</dbReference>
<dbReference type="SUPFAM" id="SSF50129">
    <property type="entry name" value="GroES-like"/>
    <property type="match status" value="1"/>
</dbReference>
<dbReference type="PROSITE" id="PS00681">
    <property type="entry name" value="CHAPERONINS_CPN10"/>
    <property type="match status" value="1"/>
</dbReference>
<evidence type="ECO:0000255" key="1">
    <source>
        <dbReference type="HAMAP-Rule" id="MF_00580"/>
    </source>
</evidence>
<name>CH10_LIGS1</name>
<protein>
    <recommendedName>
        <fullName evidence="1">Co-chaperonin GroES</fullName>
    </recommendedName>
    <alternativeName>
        <fullName evidence="1">10 kDa chaperonin</fullName>
    </alternativeName>
    <alternativeName>
        <fullName evidence="1">Chaperonin-10</fullName>
        <shortName evidence="1">Cpn10</shortName>
    </alternativeName>
</protein>
<feature type="chain" id="PRO_1000025286" description="Co-chaperonin GroES">
    <location>
        <begin position="1"/>
        <end position="94"/>
    </location>
</feature>
<reference key="1">
    <citation type="journal article" date="2006" name="Proc. Natl. Acad. Sci. U.S.A.">
        <title>Multireplicon genome architecture of Lactobacillus salivarius.</title>
        <authorList>
            <person name="Claesson M.J."/>
            <person name="Li Y."/>
            <person name="Leahy S."/>
            <person name="Canchaya C."/>
            <person name="van Pijkeren J.P."/>
            <person name="Cerdeno-Tarraga A.M."/>
            <person name="Parkhill J."/>
            <person name="Flynn S."/>
            <person name="O'Sullivan G.C."/>
            <person name="Collins J.K."/>
            <person name="Higgins D."/>
            <person name="Shanahan F."/>
            <person name="Fitzgerald G.F."/>
            <person name="van Sinderen D."/>
            <person name="O'Toole P.W."/>
        </authorList>
    </citation>
    <scope>NUCLEOTIDE SEQUENCE [LARGE SCALE GENOMIC DNA]</scope>
    <source>
        <strain>UCC118</strain>
    </source>
</reference>
<gene>
    <name evidence="1" type="primary">groES</name>
    <name evidence="1" type="synonym">groS</name>
    <name type="ordered locus">LSL_1212</name>
</gene>